<keyword id="KW-0067">ATP-binding</keyword>
<keyword id="KW-0143">Chaperone</keyword>
<keyword id="KW-0547">Nucleotide-binding</keyword>
<keyword id="KW-1185">Reference proteome</keyword>
<feature type="chain" id="PRO_0000078644" description="Chaperone protein HscA homolog">
    <location>
        <begin position="1"/>
        <end position="593"/>
    </location>
</feature>
<name>HSCA_RICPR</name>
<dbReference type="EMBL" id="AJ235270">
    <property type="protein sequence ID" value="CAA14665.1"/>
    <property type="molecule type" value="Genomic_DNA"/>
</dbReference>
<dbReference type="PIR" id="B71731">
    <property type="entry name" value="B71731"/>
</dbReference>
<dbReference type="RefSeq" id="NP_220588.1">
    <property type="nucleotide sequence ID" value="NC_000963.1"/>
</dbReference>
<dbReference type="RefSeq" id="WP_010886232.1">
    <property type="nucleotide sequence ID" value="NC_000963.1"/>
</dbReference>
<dbReference type="SMR" id="Q9ZDW5"/>
<dbReference type="STRING" id="272947.gene:17555281"/>
<dbReference type="EnsemblBacteria" id="CAA14665">
    <property type="protein sequence ID" value="CAA14665"/>
    <property type="gene ID" value="CAA14665"/>
</dbReference>
<dbReference type="KEGG" id="rpr:RP200"/>
<dbReference type="PATRIC" id="fig|272947.5.peg.209"/>
<dbReference type="eggNOG" id="COG0443">
    <property type="taxonomic scope" value="Bacteria"/>
</dbReference>
<dbReference type="HOGENOM" id="CLU_005965_2_3_5"/>
<dbReference type="OrthoDB" id="9766019at2"/>
<dbReference type="Proteomes" id="UP000002480">
    <property type="component" value="Chromosome"/>
</dbReference>
<dbReference type="GO" id="GO:0005524">
    <property type="term" value="F:ATP binding"/>
    <property type="evidence" value="ECO:0007669"/>
    <property type="project" value="UniProtKB-KW"/>
</dbReference>
<dbReference type="GO" id="GO:0016887">
    <property type="term" value="F:ATP hydrolysis activity"/>
    <property type="evidence" value="ECO:0007669"/>
    <property type="project" value="UniProtKB-UniRule"/>
</dbReference>
<dbReference type="GO" id="GO:0140662">
    <property type="term" value="F:ATP-dependent protein folding chaperone"/>
    <property type="evidence" value="ECO:0007669"/>
    <property type="project" value="InterPro"/>
</dbReference>
<dbReference type="GO" id="GO:0051082">
    <property type="term" value="F:unfolded protein binding"/>
    <property type="evidence" value="ECO:0007669"/>
    <property type="project" value="InterPro"/>
</dbReference>
<dbReference type="GO" id="GO:0016226">
    <property type="term" value="P:iron-sulfur cluster assembly"/>
    <property type="evidence" value="ECO:0007669"/>
    <property type="project" value="InterPro"/>
</dbReference>
<dbReference type="FunFam" id="2.60.34.10:FF:000005">
    <property type="entry name" value="Chaperone protein HscA homolog"/>
    <property type="match status" value="1"/>
</dbReference>
<dbReference type="Gene3D" id="1.20.1270.10">
    <property type="match status" value="1"/>
</dbReference>
<dbReference type="Gene3D" id="3.30.420.40">
    <property type="match status" value="2"/>
</dbReference>
<dbReference type="Gene3D" id="3.90.640.10">
    <property type="entry name" value="Actin, Chain A, domain 4"/>
    <property type="match status" value="1"/>
</dbReference>
<dbReference type="Gene3D" id="2.60.34.10">
    <property type="entry name" value="Substrate Binding Domain Of DNAk, Chain A, domain 1"/>
    <property type="match status" value="1"/>
</dbReference>
<dbReference type="HAMAP" id="MF_00679">
    <property type="entry name" value="HscA"/>
    <property type="match status" value="1"/>
</dbReference>
<dbReference type="InterPro" id="IPR043129">
    <property type="entry name" value="ATPase_NBD"/>
</dbReference>
<dbReference type="InterPro" id="IPR018181">
    <property type="entry name" value="Heat_shock_70_CS"/>
</dbReference>
<dbReference type="InterPro" id="IPR029048">
    <property type="entry name" value="HSP70_C_sf"/>
</dbReference>
<dbReference type="InterPro" id="IPR029047">
    <property type="entry name" value="HSP70_peptide-bd_sf"/>
</dbReference>
<dbReference type="InterPro" id="IPR013126">
    <property type="entry name" value="Hsp_70_fam"/>
</dbReference>
<dbReference type="InterPro" id="IPR010236">
    <property type="entry name" value="ISC_FeS_clus_asmbl_HscA"/>
</dbReference>
<dbReference type="NCBIfam" id="NF002399">
    <property type="entry name" value="PRK01433.1"/>
    <property type="match status" value="1"/>
</dbReference>
<dbReference type="PANTHER" id="PTHR19375">
    <property type="entry name" value="HEAT SHOCK PROTEIN 70KDA"/>
    <property type="match status" value="1"/>
</dbReference>
<dbReference type="Pfam" id="PF00012">
    <property type="entry name" value="HSP70"/>
    <property type="match status" value="1"/>
</dbReference>
<dbReference type="PRINTS" id="PR00301">
    <property type="entry name" value="HEATSHOCK70"/>
</dbReference>
<dbReference type="SUPFAM" id="SSF53067">
    <property type="entry name" value="Actin-like ATPase domain"/>
    <property type="match status" value="2"/>
</dbReference>
<dbReference type="SUPFAM" id="SSF100934">
    <property type="entry name" value="Heat shock protein 70kD (HSP70), C-terminal subdomain"/>
    <property type="match status" value="1"/>
</dbReference>
<dbReference type="SUPFAM" id="SSF100920">
    <property type="entry name" value="Heat shock protein 70kD (HSP70), peptide-binding domain"/>
    <property type="match status" value="1"/>
</dbReference>
<dbReference type="PROSITE" id="PS00329">
    <property type="entry name" value="HSP70_2"/>
    <property type="match status" value="1"/>
</dbReference>
<dbReference type="PROSITE" id="PS01036">
    <property type="entry name" value="HSP70_3"/>
    <property type="match status" value="1"/>
</dbReference>
<reference key="1">
    <citation type="journal article" date="1998" name="Nature">
        <title>The genome sequence of Rickettsia prowazekii and the origin of mitochondria.</title>
        <authorList>
            <person name="Andersson S.G.E."/>
            <person name="Zomorodipour A."/>
            <person name="Andersson J.O."/>
            <person name="Sicheritz-Ponten T."/>
            <person name="Alsmark U.C.M."/>
            <person name="Podowski R.M."/>
            <person name="Naeslund A.K."/>
            <person name="Eriksson A.-S."/>
            <person name="Winkler H.H."/>
            <person name="Kurland C.G."/>
        </authorList>
    </citation>
    <scope>NUCLEOTIDE SEQUENCE [LARGE SCALE GENOMIC DNA]</scope>
    <source>
        <strain>Madrid E</strain>
    </source>
</reference>
<comment type="function">
    <text evidence="1">Chaperone involved in the maturation of iron-sulfur cluster-containing proteins. Has a low intrinsic ATPase activity which is markedly stimulated by HscB (By similarity).</text>
</comment>
<comment type="similarity">
    <text evidence="2">Belongs to the heat shock protein 70 family.</text>
</comment>
<proteinExistence type="inferred from homology"/>
<organism>
    <name type="scientific">Rickettsia prowazekii (strain Madrid E)</name>
    <dbReference type="NCBI Taxonomy" id="272947"/>
    <lineage>
        <taxon>Bacteria</taxon>
        <taxon>Pseudomonadati</taxon>
        <taxon>Pseudomonadota</taxon>
        <taxon>Alphaproteobacteria</taxon>
        <taxon>Rickettsiales</taxon>
        <taxon>Rickettsiaceae</taxon>
        <taxon>Rickettsieae</taxon>
        <taxon>Rickettsia</taxon>
        <taxon>typhus group</taxon>
    </lineage>
</organism>
<evidence type="ECO:0000250" key="1"/>
<evidence type="ECO:0000305" key="2"/>
<gene>
    <name type="primary">hscA</name>
    <name type="ordered locus">RP200</name>
</gene>
<protein>
    <recommendedName>
        <fullName>Chaperone protein HscA homolog</fullName>
    </recommendedName>
</protein>
<sequence length="593" mass="66019">MQIIEITEPKQTDFQQKLQIAVGIDFGTTNSLIAIATNRKVKIIKSIGDKELIPTTIDFINEDLIIGNNKGLHSIKRLFGKTLKEILNTTTLFSLVKDYLDINSSELKLNFANKKMRIAEIAAEVFIYLKNQAEKQLKNNITKAVITVPAHFNDAARGEIMLAAKIAGFEVLRLIAEPTAAAYAYGLNKNQTGRYLVYDLGGGTFDVSILNIQEGIFQVIATNGDNMLGGDDIDVVITQYLCNKFDLPHSIETLQLAKKAKEILTYKESFNNDIISINKQTLEQLISPLVERTINITQECLEQSGNPNIDGVILVGGTTRIPLIKDELYKAFKIDILSDIDPDKAVVCGAALQAENLITQHTNSLLIDVVPLSLGIELYGGIVEKIITRNTPIPIAVIKEFTTYADNQTGIQFHILQGEREMAADCRSLARFELKGLPPMKAGNIRVEVTFAIDADGILSVSAYEKISNISHNIEIKPNHGINKTEIETMLKNAYKNAKIDYTTRLLQEAVIETEALMSSIERSIIKLTKLLSESEISIINALLDNIKDAVQTRDQILIKNSIKEFKSKIKKYLDTKLNINDLRKCKNSNQIK</sequence>
<accession>Q9ZDW5</accession>